<dbReference type="EC" id="2.4.1.-"/>
<dbReference type="EMBL" id="AF001308">
    <property type="protein sequence ID" value="AAC78704.1"/>
    <property type="molecule type" value="Genomic_DNA"/>
</dbReference>
<dbReference type="EMBL" id="AL161493">
    <property type="protein sequence ID" value="CAB80706.1"/>
    <property type="molecule type" value="Genomic_DNA"/>
</dbReference>
<dbReference type="EMBL" id="CP002687">
    <property type="protein sequence ID" value="AEE82127.1"/>
    <property type="molecule type" value="Genomic_DNA"/>
</dbReference>
<dbReference type="EMBL" id="CP002687">
    <property type="protein sequence ID" value="AEE82128.1"/>
    <property type="molecule type" value="Genomic_DNA"/>
</dbReference>
<dbReference type="EMBL" id="CP002687">
    <property type="protein sequence ID" value="AEE82129.1"/>
    <property type="molecule type" value="Genomic_DNA"/>
</dbReference>
<dbReference type="EMBL" id="AK119044">
    <property type="protein sequence ID" value="BAC43620.1"/>
    <property type="molecule type" value="mRNA"/>
</dbReference>
<dbReference type="EMBL" id="AY090928">
    <property type="protein sequence ID" value="AAM13982.1"/>
    <property type="molecule type" value="mRNA"/>
</dbReference>
<dbReference type="EMBL" id="BT000950">
    <property type="protein sequence ID" value="AAN41350.1"/>
    <property type="molecule type" value="mRNA"/>
</dbReference>
<dbReference type="EMBL" id="AY086171">
    <property type="protein sequence ID" value="AAM63375.1"/>
    <property type="molecule type" value="mRNA"/>
</dbReference>
<dbReference type="EMBL" id="AK229344">
    <property type="protein sequence ID" value="BAF01207.1"/>
    <property type="molecule type" value="mRNA"/>
</dbReference>
<dbReference type="PIR" id="T01514">
    <property type="entry name" value="T01514"/>
</dbReference>
<dbReference type="RefSeq" id="NP_001031573.1">
    <property type="nucleotide sequence ID" value="NM_001036496.1"/>
</dbReference>
<dbReference type="RefSeq" id="NP_192122.1">
    <property type="nucleotide sequence ID" value="NM_116445.2"/>
</dbReference>
<dbReference type="RefSeq" id="NP_849285.1">
    <property type="nucleotide sequence ID" value="NM_178954.2"/>
</dbReference>
<dbReference type="SMR" id="O04253"/>
<dbReference type="FunCoup" id="O04253">
    <property type="interactions" value="541"/>
</dbReference>
<dbReference type="STRING" id="3702.O04253"/>
<dbReference type="CAZy" id="GT8">
    <property type="family name" value="Glycosyltransferase Family 8"/>
</dbReference>
<dbReference type="GlyCosmos" id="O04253">
    <property type="glycosylation" value="1 site, No reported glycans"/>
</dbReference>
<dbReference type="GlyGen" id="O04253">
    <property type="glycosylation" value="1 site"/>
</dbReference>
<dbReference type="PaxDb" id="3702-AT4G02130.3"/>
<dbReference type="EnsemblPlants" id="AT4G02130.1">
    <property type="protein sequence ID" value="AT4G02130.1"/>
    <property type="gene ID" value="AT4G02130"/>
</dbReference>
<dbReference type="EnsemblPlants" id="AT4G02130.2">
    <property type="protein sequence ID" value="AT4G02130.2"/>
    <property type="gene ID" value="AT4G02130"/>
</dbReference>
<dbReference type="EnsemblPlants" id="AT4G02130.3">
    <property type="protein sequence ID" value="AT4G02130.3"/>
    <property type="gene ID" value="AT4G02130"/>
</dbReference>
<dbReference type="GeneID" id="827438"/>
<dbReference type="Gramene" id="AT4G02130.1">
    <property type="protein sequence ID" value="AT4G02130.1"/>
    <property type="gene ID" value="AT4G02130"/>
</dbReference>
<dbReference type="Gramene" id="AT4G02130.2">
    <property type="protein sequence ID" value="AT4G02130.2"/>
    <property type="gene ID" value="AT4G02130"/>
</dbReference>
<dbReference type="Gramene" id="AT4G02130.3">
    <property type="protein sequence ID" value="AT4G02130.3"/>
    <property type="gene ID" value="AT4G02130"/>
</dbReference>
<dbReference type="KEGG" id="ath:AT4G02130"/>
<dbReference type="Araport" id="AT4G02130"/>
<dbReference type="TAIR" id="AT4G02130">
    <property type="gene designation" value="GATL6"/>
</dbReference>
<dbReference type="eggNOG" id="ENOG502QTN8">
    <property type="taxonomic scope" value="Eukaryota"/>
</dbReference>
<dbReference type="HOGENOM" id="CLU_034713_1_0_1"/>
<dbReference type="InParanoid" id="O04253"/>
<dbReference type="OMA" id="FWAEERF"/>
<dbReference type="PhylomeDB" id="O04253"/>
<dbReference type="UniPathway" id="UPA00845"/>
<dbReference type="PRO" id="PR:O04253"/>
<dbReference type="Proteomes" id="UP000006548">
    <property type="component" value="Chromosome 4"/>
</dbReference>
<dbReference type="ExpressionAtlas" id="O04253">
    <property type="expression patterns" value="baseline and differential"/>
</dbReference>
<dbReference type="GO" id="GO:0000139">
    <property type="term" value="C:Golgi membrane"/>
    <property type="evidence" value="ECO:0007669"/>
    <property type="project" value="UniProtKB-SubCell"/>
</dbReference>
<dbReference type="GO" id="GO:0047262">
    <property type="term" value="F:polygalacturonate 4-alpha-galacturonosyltransferase activity"/>
    <property type="evidence" value="ECO:0000250"/>
    <property type="project" value="TAIR"/>
</dbReference>
<dbReference type="GO" id="GO:0071555">
    <property type="term" value="P:cell wall organization"/>
    <property type="evidence" value="ECO:0007669"/>
    <property type="project" value="UniProtKB-KW"/>
</dbReference>
<dbReference type="GO" id="GO:0045489">
    <property type="term" value="P:pectin biosynthetic process"/>
    <property type="evidence" value="ECO:0007669"/>
    <property type="project" value="UniProtKB-UniPathway"/>
</dbReference>
<dbReference type="FunFam" id="3.90.550.10:FF:000024">
    <property type="entry name" value="Hexosyltransferase"/>
    <property type="match status" value="1"/>
</dbReference>
<dbReference type="Gene3D" id="3.90.550.10">
    <property type="entry name" value="Spore Coat Polysaccharide Biosynthesis Protein SpsA, Chain A"/>
    <property type="match status" value="1"/>
</dbReference>
<dbReference type="InterPro" id="IPR002495">
    <property type="entry name" value="Glyco_trans_8"/>
</dbReference>
<dbReference type="InterPro" id="IPR050748">
    <property type="entry name" value="Glycosyltrans_8_dom-fam"/>
</dbReference>
<dbReference type="InterPro" id="IPR029044">
    <property type="entry name" value="Nucleotide-diphossugar_trans"/>
</dbReference>
<dbReference type="PANTHER" id="PTHR13778:SF68">
    <property type="entry name" value="GALACTURONOSYLTRANSFERASE-LIKE 6-RELATED"/>
    <property type="match status" value="1"/>
</dbReference>
<dbReference type="PANTHER" id="PTHR13778">
    <property type="entry name" value="GLYCOSYLTRANSFERASE 8 DOMAIN-CONTAINING PROTEIN"/>
    <property type="match status" value="1"/>
</dbReference>
<dbReference type="Pfam" id="PF01501">
    <property type="entry name" value="Glyco_transf_8"/>
    <property type="match status" value="1"/>
</dbReference>
<dbReference type="SUPFAM" id="SSF53448">
    <property type="entry name" value="Nucleotide-diphospho-sugar transferases"/>
    <property type="match status" value="1"/>
</dbReference>
<reference key="1">
    <citation type="journal article" date="1999" name="Nature">
        <title>Sequence and analysis of chromosome 4 of the plant Arabidopsis thaliana.</title>
        <authorList>
            <person name="Mayer K.F.X."/>
            <person name="Schueller C."/>
            <person name="Wambutt R."/>
            <person name="Murphy G."/>
            <person name="Volckaert G."/>
            <person name="Pohl T."/>
            <person name="Duesterhoeft A."/>
            <person name="Stiekema W."/>
            <person name="Entian K.-D."/>
            <person name="Terryn N."/>
            <person name="Harris B."/>
            <person name="Ansorge W."/>
            <person name="Brandt P."/>
            <person name="Grivell L.A."/>
            <person name="Rieger M."/>
            <person name="Weichselgartner M."/>
            <person name="de Simone V."/>
            <person name="Obermaier B."/>
            <person name="Mache R."/>
            <person name="Mueller M."/>
            <person name="Kreis M."/>
            <person name="Delseny M."/>
            <person name="Puigdomenech P."/>
            <person name="Watson M."/>
            <person name="Schmidtheini T."/>
            <person name="Reichert B."/>
            <person name="Portetelle D."/>
            <person name="Perez-Alonso M."/>
            <person name="Boutry M."/>
            <person name="Bancroft I."/>
            <person name="Vos P."/>
            <person name="Hoheisel J."/>
            <person name="Zimmermann W."/>
            <person name="Wedler H."/>
            <person name="Ridley P."/>
            <person name="Langham S.-A."/>
            <person name="McCullagh B."/>
            <person name="Bilham L."/>
            <person name="Robben J."/>
            <person name="van der Schueren J."/>
            <person name="Grymonprez B."/>
            <person name="Chuang Y.-J."/>
            <person name="Vandenbussche F."/>
            <person name="Braeken M."/>
            <person name="Weltjens I."/>
            <person name="Voet M."/>
            <person name="Bastiaens I."/>
            <person name="Aert R."/>
            <person name="Defoor E."/>
            <person name="Weitzenegger T."/>
            <person name="Bothe G."/>
            <person name="Ramsperger U."/>
            <person name="Hilbert H."/>
            <person name="Braun M."/>
            <person name="Holzer E."/>
            <person name="Brandt A."/>
            <person name="Peters S."/>
            <person name="van Staveren M."/>
            <person name="Dirkse W."/>
            <person name="Mooijman P."/>
            <person name="Klein Lankhorst R."/>
            <person name="Rose M."/>
            <person name="Hauf J."/>
            <person name="Koetter P."/>
            <person name="Berneiser S."/>
            <person name="Hempel S."/>
            <person name="Feldpausch M."/>
            <person name="Lamberth S."/>
            <person name="Van den Daele H."/>
            <person name="De Keyser A."/>
            <person name="Buysshaert C."/>
            <person name="Gielen J."/>
            <person name="Villarroel R."/>
            <person name="De Clercq R."/>
            <person name="van Montagu M."/>
            <person name="Rogers J."/>
            <person name="Cronin A."/>
            <person name="Quail M.A."/>
            <person name="Bray-Allen S."/>
            <person name="Clark L."/>
            <person name="Doggett J."/>
            <person name="Hall S."/>
            <person name="Kay M."/>
            <person name="Lennard N."/>
            <person name="McLay K."/>
            <person name="Mayes R."/>
            <person name="Pettett A."/>
            <person name="Rajandream M.A."/>
            <person name="Lyne M."/>
            <person name="Benes V."/>
            <person name="Rechmann S."/>
            <person name="Borkova D."/>
            <person name="Bloecker H."/>
            <person name="Scharfe M."/>
            <person name="Grimm M."/>
            <person name="Loehnert T.-H."/>
            <person name="Dose S."/>
            <person name="de Haan M."/>
            <person name="Maarse A.C."/>
            <person name="Schaefer M."/>
            <person name="Mueller-Auer S."/>
            <person name="Gabel C."/>
            <person name="Fuchs M."/>
            <person name="Fartmann B."/>
            <person name="Granderath K."/>
            <person name="Dauner D."/>
            <person name="Herzl A."/>
            <person name="Neumann S."/>
            <person name="Argiriou A."/>
            <person name="Vitale D."/>
            <person name="Liguori R."/>
            <person name="Piravandi E."/>
            <person name="Massenet O."/>
            <person name="Quigley F."/>
            <person name="Clabauld G."/>
            <person name="Muendlein A."/>
            <person name="Felber R."/>
            <person name="Schnabl S."/>
            <person name="Hiller R."/>
            <person name="Schmidt W."/>
            <person name="Lecharny A."/>
            <person name="Aubourg S."/>
            <person name="Chefdor F."/>
            <person name="Cooke R."/>
            <person name="Berger C."/>
            <person name="Monfort A."/>
            <person name="Casacuberta E."/>
            <person name="Gibbons T."/>
            <person name="Weber N."/>
            <person name="Vandenbol M."/>
            <person name="Bargues M."/>
            <person name="Terol J."/>
            <person name="Torres A."/>
            <person name="Perez-Perez A."/>
            <person name="Purnelle B."/>
            <person name="Bent E."/>
            <person name="Johnson S."/>
            <person name="Tacon D."/>
            <person name="Jesse T."/>
            <person name="Heijnen L."/>
            <person name="Schwarz S."/>
            <person name="Scholler P."/>
            <person name="Heber S."/>
            <person name="Francs P."/>
            <person name="Bielke C."/>
            <person name="Frishman D."/>
            <person name="Haase D."/>
            <person name="Lemcke K."/>
            <person name="Mewes H.-W."/>
            <person name="Stocker S."/>
            <person name="Zaccaria P."/>
            <person name="Bevan M."/>
            <person name="Wilson R.K."/>
            <person name="de la Bastide M."/>
            <person name="Habermann K."/>
            <person name="Parnell L."/>
            <person name="Dedhia N."/>
            <person name="Gnoj L."/>
            <person name="Schutz K."/>
            <person name="Huang E."/>
            <person name="Spiegel L."/>
            <person name="Sekhon M."/>
            <person name="Murray J."/>
            <person name="Sheet P."/>
            <person name="Cordes M."/>
            <person name="Abu-Threideh J."/>
            <person name="Stoneking T."/>
            <person name="Kalicki J."/>
            <person name="Graves T."/>
            <person name="Harmon G."/>
            <person name="Edwards J."/>
            <person name="Latreille P."/>
            <person name="Courtney L."/>
            <person name="Cloud J."/>
            <person name="Abbott A."/>
            <person name="Scott K."/>
            <person name="Johnson D."/>
            <person name="Minx P."/>
            <person name="Bentley D."/>
            <person name="Fulton B."/>
            <person name="Miller N."/>
            <person name="Greco T."/>
            <person name="Kemp K."/>
            <person name="Kramer J."/>
            <person name="Fulton L."/>
            <person name="Mardis E."/>
            <person name="Dante M."/>
            <person name="Pepin K."/>
            <person name="Hillier L.W."/>
            <person name="Nelson J."/>
            <person name="Spieth J."/>
            <person name="Ryan E."/>
            <person name="Andrews S."/>
            <person name="Geisel C."/>
            <person name="Layman D."/>
            <person name="Du H."/>
            <person name="Ali J."/>
            <person name="Berghoff A."/>
            <person name="Jones K."/>
            <person name="Drone K."/>
            <person name="Cotton M."/>
            <person name="Joshu C."/>
            <person name="Antonoiu B."/>
            <person name="Zidanic M."/>
            <person name="Strong C."/>
            <person name="Sun H."/>
            <person name="Lamar B."/>
            <person name="Yordan C."/>
            <person name="Ma P."/>
            <person name="Zhong J."/>
            <person name="Preston R."/>
            <person name="Vil D."/>
            <person name="Shekher M."/>
            <person name="Matero A."/>
            <person name="Shah R."/>
            <person name="Swaby I.K."/>
            <person name="O'Shaughnessy A."/>
            <person name="Rodriguez M."/>
            <person name="Hoffman J."/>
            <person name="Till S."/>
            <person name="Granat S."/>
            <person name="Shohdy N."/>
            <person name="Hasegawa A."/>
            <person name="Hameed A."/>
            <person name="Lodhi M."/>
            <person name="Johnson A."/>
            <person name="Chen E."/>
            <person name="Marra M.A."/>
            <person name="Martienssen R."/>
            <person name="McCombie W.R."/>
        </authorList>
    </citation>
    <scope>NUCLEOTIDE SEQUENCE [LARGE SCALE GENOMIC DNA]</scope>
    <source>
        <strain>cv. Columbia</strain>
    </source>
</reference>
<reference key="2">
    <citation type="journal article" date="2017" name="Plant J.">
        <title>Araport11: a complete reannotation of the Arabidopsis thaliana reference genome.</title>
        <authorList>
            <person name="Cheng C.Y."/>
            <person name="Krishnakumar V."/>
            <person name="Chan A.P."/>
            <person name="Thibaud-Nissen F."/>
            <person name="Schobel S."/>
            <person name="Town C.D."/>
        </authorList>
    </citation>
    <scope>GENOME REANNOTATION</scope>
    <source>
        <strain>cv. Columbia</strain>
    </source>
</reference>
<reference key="3">
    <citation type="journal article" date="2002" name="Science">
        <title>Functional annotation of a full-length Arabidopsis cDNA collection.</title>
        <authorList>
            <person name="Seki M."/>
            <person name="Narusaka M."/>
            <person name="Kamiya A."/>
            <person name="Ishida J."/>
            <person name="Satou M."/>
            <person name="Sakurai T."/>
            <person name="Nakajima M."/>
            <person name="Enju A."/>
            <person name="Akiyama K."/>
            <person name="Oono Y."/>
            <person name="Muramatsu M."/>
            <person name="Hayashizaki Y."/>
            <person name="Kawai J."/>
            <person name="Carninci P."/>
            <person name="Itoh M."/>
            <person name="Ishii Y."/>
            <person name="Arakawa T."/>
            <person name="Shibata K."/>
            <person name="Shinagawa A."/>
            <person name="Shinozaki K."/>
        </authorList>
    </citation>
    <scope>NUCLEOTIDE SEQUENCE [LARGE SCALE MRNA]</scope>
    <source>
        <strain>cv. Columbia</strain>
    </source>
</reference>
<reference key="4">
    <citation type="journal article" date="2003" name="Science">
        <title>Empirical analysis of transcriptional activity in the Arabidopsis genome.</title>
        <authorList>
            <person name="Yamada K."/>
            <person name="Lim J."/>
            <person name="Dale J.M."/>
            <person name="Chen H."/>
            <person name="Shinn P."/>
            <person name="Palm C.J."/>
            <person name="Southwick A.M."/>
            <person name="Wu H.C."/>
            <person name="Kim C.J."/>
            <person name="Nguyen M."/>
            <person name="Pham P.K."/>
            <person name="Cheuk R.F."/>
            <person name="Karlin-Newmann G."/>
            <person name="Liu S.X."/>
            <person name="Lam B."/>
            <person name="Sakano H."/>
            <person name="Wu T."/>
            <person name="Yu G."/>
            <person name="Miranda M."/>
            <person name="Quach H.L."/>
            <person name="Tripp M."/>
            <person name="Chang C.H."/>
            <person name="Lee J.M."/>
            <person name="Toriumi M.J."/>
            <person name="Chan M.M."/>
            <person name="Tang C.C."/>
            <person name="Onodera C.S."/>
            <person name="Deng J.M."/>
            <person name="Akiyama K."/>
            <person name="Ansari Y."/>
            <person name="Arakawa T."/>
            <person name="Banh J."/>
            <person name="Banno F."/>
            <person name="Bowser L."/>
            <person name="Brooks S.Y."/>
            <person name="Carninci P."/>
            <person name="Chao Q."/>
            <person name="Choy N."/>
            <person name="Enju A."/>
            <person name="Goldsmith A.D."/>
            <person name="Gurjal M."/>
            <person name="Hansen N.F."/>
            <person name="Hayashizaki Y."/>
            <person name="Johnson-Hopson C."/>
            <person name="Hsuan V.W."/>
            <person name="Iida K."/>
            <person name="Karnes M."/>
            <person name="Khan S."/>
            <person name="Koesema E."/>
            <person name="Ishida J."/>
            <person name="Jiang P.X."/>
            <person name="Jones T."/>
            <person name="Kawai J."/>
            <person name="Kamiya A."/>
            <person name="Meyers C."/>
            <person name="Nakajima M."/>
            <person name="Narusaka M."/>
            <person name="Seki M."/>
            <person name="Sakurai T."/>
            <person name="Satou M."/>
            <person name="Tamse R."/>
            <person name="Vaysberg M."/>
            <person name="Wallender E.K."/>
            <person name="Wong C."/>
            <person name="Yamamura Y."/>
            <person name="Yuan S."/>
            <person name="Shinozaki K."/>
            <person name="Davis R.W."/>
            <person name="Theologis A."/>
            <person name="Ecker J.R."/>
        </authorList>
    </citation>
    <scope>NUCLEOTIDE SEQUENCE [LARGE SCALE MRNA]</scope>
    <source>
        <strain>cv. Columbia</strain>
    </source>
</reference>
<reference key="5">
    <citation type="submission" date="2002-03" db="EMBL/GenBank/DDBJ databases">
        <title>Full-length cDNA from Arabidopsis thaliana.</title>
        <authorList>
            <person name="Brover V.V."/>
            <person name="Troukhan M.E."/>
            <person name="Alexandrov N.A."/>
            <person name="Lu Y.-P."/>
            <person name="Flavell R.B."/>
            <person name="Feldmann K.A."/>
        </authorList>
    </citation>
    <scope>NUCLEOTIDE SEQUENCE [LARGE SCALE MRNA]</scope>
</reference>
<reference key="6">
    <citation type="submission" date="2006-07" db="EMBL/GenBank/DDBJ databases">
        <title>Large-scale analysis of RIKEN Arabidopsis full-length (RAFL) cDNAs.</title>
        <authorList>
            <person name="Totoki Y."/>
            <person name="Seki M."/>
            <person name="Ishida J."/>
            <person name="Nakajima M."/>
            <person name="Enju A."/>
            <person name="Kamiya A."/>
            <person name="Narusaka M."/>
            <person name="Shin-i T."/>
            <person name="Nakagawa M."/>
            <person name="Sakamoto N."/>
            <person name="Oishi K."/>
            <person name="Kohara Y."/>
            <person name="Kobayashi M."/>
            <person name="Toyoda A."/>
            <person name="Sakaki Y."/>
            <person name="Sakurai T."/>
            <person name="Iida K."/>
            <person name="Akiyama K."/>
            <person name="Satou M."/>
            <person name="Toyoda T."/>
            <person name="Konagaya A."/>
            <person name="Carninci P."/>
            <person name="Kawai J."/>
            <person name="Hayashizaki Y."/>
            <person name="Shinozaki K."/>
        </authorList>
    </citation>
    <scope>NUCLEOTIDE SEQUENCE [LARGE SCALE MRNA]</scope>
    <source>
        <strain>cv. Columbia</strain>
    </source>
</reference>
<reference key="7">
    <citation type="journal article" date="2000" name="Plant Mol. Biol.">
        <title>Organization and structural evolution of four multigene families in Arabidopsis thaliana: AtLCAD, AtLGT, AtMYST and AtHD-GL2.</title>
        <authorList>
            <person name="Tavares R."/>
            <person name="Aubourg S."/>
            <person name="Lecharny A."/>
            <person name="Kreis M."/>
        </authorList>
    </citation>
    <scope>GENE FAMILY</scope>
    <scope>NOMENCLATURE</scope>
</reference>
<reference key="8">
    <citation type="journal article" date="2006" name="Proc. Natl. Acad. Sci. U.S.A.">
        <title>Functional identification of an Arabidopsis pectin biosynthetic homogalacturonan galacturonosyltransferase.</title>
        <authorList>
            <person name="Sterling J.D."/>
            <person name="Atmodjo M.A."/>
            <person name="Inwood S.E."/>
            <person name="Kumar Kolli V.S."/>
            <person name="Quigley H.F."/>
            <person name="Hahn M.G."/>
            <person name="Mohnen D."/>
        </authorList>
    </citation>
    <scope>GENE FAMILY</scope>
    <scope>NOMENCLATURE</scope>
</reference>
<feature type="chain" id="PRO_0000392608" description="Probable galacturonosyltransferase-like 6">
    <location>
        <begin position="1"/>
        <end position="346"/>
    </location>
</feature>
<feature type="transmembrane region" description="Helical; Signal-anchor for type II membrane protein" evidence="2">
    <location>
        <begin position="1"/>
        <end position="21"/>
    </location>
</feature>
<feature type="topological domain" description="Lumenal" evidence="2">
    <location>
        <begin position="22"/>
        <end position="346"/>
    </location>
</feature>
<feature type="glycosylation site" description="N-linked (GlcNAc...) asparagine" evidence="2">
    <location>
        <position position="203"/>
    </location>
</feature>
<feature type="sequence conflict" description="In Ref. 5; AAM63375." evidence="3" ref="5">
    <original>R</original>
    <variation>G</variation>
    <location>
        <position position="121"/>
    </location>
</feature>
<feature type="sequence conflict" description="In Ref. 5; AAM63375." evidence="3" ref="5">
    <original>H</original>
    <variation>Y</variation>
    <location>
        <position position="201"/>
    </location>
</feature>
<feature type="sequence conflict" description="In Ref. 5; AAM63375." evidence="3" ref="5">
    <original>S</original>
    <variation>A</variation>
    <location>
        <position position="277"/>
    </location>
</feature>
<gene>
    <name type="primary">GATL6</name>
    <name type="synonym">LGT10</name>
    <name type="ordered locus">At4g02130</name>
    <name type="ORF">T10M13.14</name>
</gene>
<name>GATL6_ARATH</name>
<evidence type="ECO:0000250" key="1"/>
<evidence type="ECO:0000255" key="2"/>
<evidence type="ECO:0000305" key="3"/>
<keyword id="KW-0961">Cell wall biogenesis/degradation</keyword>
<keyword id="KW-0325">Glycoprotein</keyword>
<keyword id="KW-0328">Glycosyltransferase</keyword>
<keyword id="KW-0333">Golgi apparatus</keyword>
<keyword id="KW-0472">Membrane</keyword>
<keyword id="KW-1185">Reference proteome</keyword>
<keyword id="KW-0735">Signal-anchor</keyword>
<keyword id="KW-0808">Transferase</keyword>
<keyword id="KW-0812">Transmembrane</keyword>
<keyword id="KW-1133">Transmembrane helix</keyword>
<organism>
    <name type="scientific">Arabidopsis thaliana</name>
    <name type="common">Mouse-ear cress</name>
    <dbReference type="NCBI Taxonomy" id="3702"/>
    <lineage>
        <taxon>Eukaryota</taxon>
        <taxon>Viridiplantae</taxon>
        <taxon>Streptophyta</taxon>
        <taxon>Embryophyta</taxon>
        <taxon>Tracheophyta</taxon>
        <taxon>Spermatophyta</taxon>
        <taxon>Magnoliopsida</taxon>
        <taxon>eudicotyledons</taxon>
        <taxon>Gunneridae</taxon>
        <taxon>Pentapetalae</taxon>
        <taxon>rosids</taxon>
        <taxon>malvids</taxon>
        <taxon>Brassicales</taxon>
        <taxon>Brassicaceae</taxon>
        <taxon>Camelineae</taxon>
        <taxon>Arabidopsis</taxon>
    </lineage>
</organism>
<accession>O04253</accession>
<accession>Q8LD72</accession>
<accession>Q8RX31</accession>
<sequence length="346" mass="38962">MLWITRFAGLFSAAMAVIVLSPSLQSFPPAAAIRSSPSPIFRKAPAVFNNGDECLSSGGVCNPSLVHVAITLDVEYLRGSIAAVNSILQHSVCPESVFFHFIAVSEETNLLESLVRSVFPRLKFNIYDFAPETVRGLISSSVRQALEQPLNYARSYLADLLEPCVNRVIYLDSDLVVVDDIAKLWKTSLGSRIIGAPEYCHANFTKYFTGGFWSEERFSGTFRGRKPCYFNTGVMVIDLKKWRRGGYTKRIEKWMEIQRRERIYELGSLPPFLLVFSGHVAPISHRWNQHGLGGDNVRGSCRDLHPGPVSLLHWSGSGKPWIRLDSKRPCPLDALWTPYDLYRHSH</sequence>
<proteinExistence type="evidence at transcript level"/>
<protein>
    <recommendedName>
        <fullName>Probable galacturonosyltransferase-like 6</fullName>
        <ecNumber>2.4.1.-</ecNumber>
    </recommendedName>
    <alternativeName>
        <fullName>Like glycosyl transferase 10</fullName>
    </alternativeName>
</protein>
<comment type="function">
    <text evidence="1">May be involved in pectin and/or xylans biosynthesis in cell walls.</text>
</comment>
<comment type="pathway">
    <text>Glycan metabolism; pectin biosynthesis.</text>
</comment>
<comment type="subcellular location">
    <subcellularLocation>
        <location evidence="1">Golgi apparatus membrane</location>
        <topology evidence="1">Single-pass type II membrane protein</topology>
    </subcellularLocation>
</comment>
<comment type="similarity">
    <text evidence="3">Belongs to the glycosyltransferase 8 family.</text>
</comment>